<organism>
    <name type="scientific">Escherichia coli O6:H1 (strain CFT073 / ATCC 700928 / UPEC)</name>
    <dbReference type="NCBI Taxonomy" id="199310"/>
    <lineage>
        <taxon>Bacteria</taxon>
        <taxon>Pseudomonadati</taxon>
        <taxon>Pseudomonadota</taxon>
        <taxon>Gammaproteobacteria</taxon>
        <taxon>Enterobacterales</taxon>
        <taxon>Enterobacteriaceae</taxon>
        <taxon>Escherichia</taxon>
    </lineage>
</organism>
<sequence>MTHKATEILTGKVMQKSVLITGCSSGIGLESALELKRQGFHVLAGCRKPDDVERMNSMGFTGVLIDLDSPESVDRAADEVIALTDNCLYGIFNNAGFGMYGPLSTISRAQMEQQFSANFFGAHQLTMRLLPAMLPHGEGRIVMTSSVMGLISTPGRGAYAASKYALEAWSDALRMELRHSGIKVSLIEPGPIRTRFTDNVNQTQSDKPVENPGIAARFTLGPEAVVDKVRHAFISEKPKMRYPVTLVTWAVMVLKRLLPGRVMDKILQG</sequence>
<evidence type="ECO:0000250" key="1"/>
<evidence type="ECO:0000255" key="2">
    <source>
        <dbReference type="PROSITE-ProRule" id="PRU10001"/>
    </source>
</evidence>
<evidence type="ECO:0000305" key="3"/>
<protein>
    <recommendedName>
        <fullName>Uncharacterized oxidoreductase YbbO</fullName>
        <ecNumber>1.-.-.-</ecNumber>
    </recommendedName>
</protein>
<accession>P0AFP5</accession>
<accession>P77388</accession>
<keyword id="KW-0560">Oxidoreductase</keyword>
<keyword id="KW-1185">Reference proteome</keyword>
<name>YBBO_ECOL6</name>
<reference key="1">
    <citation type="journal article" date="2002" name="Proc. Natl. Acad. Sci. U.S.A.">
        <title>Extensive mosaic structure revealed by the complete genome sequence of uropathogenic Escherichia coli.</title>
        <authorList>
            <person name="Welch R.A."/>
            <person name="Burland V."/>
            <person name="Plunkett G. III"/>
            <person name="Redford P."/>
            <person name="Roesch P."/>
            <person name="Rasko D."/>
            <person name="Buckles E.L."/>
            <person name="Liou S.-R."/>
            <person name="Boutin A."/>
            <person name="Hackett J."/>
            <person name="Stroud D."/>
            <person name="Mayhew G.F."/>
            <person name="Rose D.J."/>
            <person name="Zhou S."/>
            <person name="Schwartz D.C."/>
            <person name="Perna N.T."/>
            <person name="Mobley H.L.T."/>
            <person name="Donnenberg M.S."/>
            <person name="Blattner F.R."/>
        </authorList>
    </citation>
    <scope>NUCLEOTIDE SEQUENCE [LARGE SCALE GENOMIC DNA]</scope>
    <source>
        <strain>CFT073 / ATCC 700928 / UPEC</strain>
    </source>
</reference>
<gene>
    <name type="primary">ybbO</name>
    <name type="ordered locus">c0614</name>
</gene>
<proteinExistence type="inferred from homology"/>
<comment type="similarity">
    <text evidence="3">Belongs to the short-chain dehydrogenases/reductases (SDR) family.</text>
</comment>
<feature type="chain" id="PRO_0000054823" description="Uncharacterized oxidoreductase YbbO">
    <location>
        <begin position="1"/>
        <end position="269"/>
    </location>
</feature>
<feature type="active site" description="Proton acceptor" evidence="2">
    <location>
        <position position="159"/>
    </location>
</feature>
<feature type="binding site" evidence="1">
    <location>
        <begin position="15"/>
        <end position="41"/>
    </location>
    <ligand>
        <name>NADP(+)</name>
        <dbReference type="ChEBI" id="CHEBI:58349"/>
    </ligand>
</feature>
<feature type="binding site" evidence="1">
    <location>
        <position position="146"/>
    </location>
    <ligand>
        <name>substrate</name>
    </ligand>
</feature>
<dbReference type="EC" id="1.-.-.-"/>
<dbReference type="EMBL" id="AE014075">
    <property type="protein sequence ID" value="AAN79091.1"/>
    <property type="molecule type" value="Genomic_DNA"/>
</dbReference>
<dbReference type="RefSeq" id="WP_000148959.1">
    <property type="nucleotide sequence ID" value="NZ_CP051263.1"/>
</dbReference>
<dbReference type="SMR" id="P0AFP5"/>
<dbReference type="STRING" id="199310.c0614"/>
<dbReference type="GeneID" id="93776956"/>
<dbReference type="KEGG" id="ecc:c0614"/>
<dbReference type="eggNOG" id="COG0300">
    <property type="taxonomic scope" value="Bacteria"/>
</dbReference>
<dbReference type="HOGENOM" id="CLU_010194_2_9_6"/>
<dbReference type="BioCyc" id="ECOL199310:C0614-MONOMER"/>
<dbReference type="Proteomes" id="UP000001410">
    <property type="component" value="Chromosome"/>
</dbReference>
<dbReference type="GO" id="GO:0016491">
    <property type="term" value="F:oxidoreductase activity"/>
    <property type="evidence" value="ECO:0007669"/>
    <property type="project" value="UniProtKB-KW"/>
</dbReference>
<dbReference type="GO" id="GO:0008202">
    <property type="term" value="P:steroid metabolic process"/>
    <property type="evidence" value="ECO:0007669"/>
    <property type="project" value="TreeGrafter"/>
</dbReference>
<dbReference type="CDD" id="cd05374">
    <property type="entry name" value="17beta-HSD-like_SDR_c"/>
    <property type="match status" value="1"/>
</dbReference>
<dbReference type="FunFam" id="3.40.50.720:FF:000230">
    <property type="entry name" value="Oxidoreductase, short chain dehydrogenase/reductase family"/>
    <property type="match status" value="1"/>
</dbReference>
<dbReference type="Gene3D" id="3.40.50.720">
    <property type="entry name" value="NAD(P)-binding Rossmann-like Domain"/>
    <property type="match status" value="1"/>
</dbReference>
<dbReference type="InterPro" id="IPR036291">
    <property type="entry name" value="NAD(P)-bd_dom_sf"/>
</dbReference>
<dbReference type="InterPro" id="IPR020904">
    <property type="entry name" value="Sc_DH/Rdtase_CS"/>
</dbReference>
<dbReference type="InterPro" id="IPR002347">
    <property type="entry name" value="SDR_fam"/>
</dbReference>
<dbReference type="NCBIfam" id="NF005950">
    <property type="entry name" value="PRK08017.1"/>
    <property type="match status" value="1"/>
</dbReference>
<dbReference type="PANTHER" id="PTHR43313:SF1">
    <property type="entry name" value="3BETA-HYDROXYSTEROID DEHYDROGENASE DHS-16"/>
    <property type="match status" value="1"/>
</dbReference>
<dbReference type="PANTHER" id="PTHR43313">
    <property type="entry name" value="SHORT-CHAIN DEHYDROGENASE/REDUCTASE FAMILY 9C"/>
    <property type="match status" value="1"/>
</dbReference>
<dbReference type="Pfam" id="PF00106">
    <property type="entry name" value="adh_short"/>
    <property type="match status" value="1"/>
</dbReference>
<dbReference type="PRINTS" id="PR00081">
    <property type="entry name" value="GDHRDH"/>
</dbReference>
<dbReference type="SMART" id="SM00822">
    <property type="entry name" value="PKS_KR"/>
    <property type="match status" value="1"/>
</dbReference>
<dbReference type="SUPFAM" id="SSF51735">
    <property type="entry name" value="NAD(P)-binding Rossmann-fold domains"/>
    <property type="match status" value="1"/>
</dbReference>
<dbReference type="PROSITE" id="PS00061">
    <property type="entry name" value="ADH_SHORT"/>
    <property type="match status" value="1"/>
</dbReference>